<reference key="1">
    <citation type="book" date="1978" name="Immediate hypersensitivity: modern concepts and developments">
        <editorList>
            <person name="Bach M.K."/>
        </editorList>
        <authorList>
            <person name="Bennich H.H."/>
            <person name="Johansson S.G.O."/>
            <person name="von Bahr-Lindstroem H."/>
        </authorList>
    </citation>
    <scope>PROTEIN SEQUENCE</scope>
    <scope>PYROGLUTAMATE FORMATION AT GLN-1</scope>
    <scope>DISULFIDE BOND</scope>
    <scope>GLYCOSYLATION AT ASN-145; ASN-173; ASN-219; ASN-265; ASN-371; ASN-383 AND ASN-394</scope>
</reference>
<reference key="2">
    <citation type="journal article" date="2007" name="Annu. Rev. Genet.">
        <title>Immunoglobulin somatic hypermutation.</title>
        <authorList>
            <person name="Teng G."/>
            <person name="Papavasiliou F.N."/>
        </authorList>
    </citation>
    <scope>REVIEW ON SOMATIC HYPERMUTATION</scope>
</reference>
<reference key="3">
    <citation type="journal article" date="2010" name="J. Allergy Clin. Immunol.">
        <title>Structure and function of immunoglobulins.</title>
        <authorList>
            <person name="Schroeder H.W. Jr."/>
            <person name="Cavacini L."/>
        </authorList>
    </citation>
    <scope>REVIEW ON IMMUNOGLOBULINS</scope>
</reference>
<reference key="4">
    <citation type="journal article" date="2012" name="Nat. Rev. Immunol.">
        <title>Molecular programming of B cell memory.</title>
        <authorList>
            <person name="McHeyzer-Williams M."/>
            <person name="Okitsu S."/>
            <person name="Wang N."/>
            <person name="McHeyzer-Williams L."/>
        </authorList>
    </citation>
    <scope>REVIEW ON FUNCTION</scope>
</reference>
<name>IGE_HUMAN</name>
<comment type="function">
    <text evidence="4 5 6">Immunoglobulins, also known as antibodies, are membrane-bound or secreted glycoproteins produced by B lymphocytes. In the recognition phase of humoral immunity, the membrane-bound immunoglobulins serve as receptors which, upon binding of a specific antigen, trigger the clonal expansion and differentiation of B lymphocytes into immunoglobulins-secreting plasma cells. Secreted immunoglobulins mediate the effector phase of humoral immunity, which results in the elimination of bound antigens (PubMed:20176268, PubMed:22158414). The antigen binding site is formed by the variable domain of one heavy chain, together with that of its associated light chain. Thus, each immunoglobulin has two antigen binding sites with remarkable affinity for a particular antigen. The variable domains are assembled by a process called V-(D)-J rearrangement and can then be subjected to somatic hypermutations which, after exposure to antigen and selection, allow affinity maturation for a particular antigen (PubMed:17576170, PubMed:20176268).</text>
</comment>
<comment type="subunit">
    <text evidence="5">Immunoglobulins are composed of two identical heavy chains and two identical light chains; disulfide-linked.</text>
</comment>
<comment type="subcellular location">
    <subcellularLocation>
        <location evidence="5 6">Secreted</location>
    </subcellularLocation>
    <subcellularLocation>
        <location evidence="5 6">Cell membrane</location>
    </subcellularLocation>
</comment>
<comment type="caution">
    <text evidence="7">This sequence is an example of a full-length immunoglobulin epsilon heavy chain.</text>
</comment>
<accession>P0DOX4</accession>
<evidence type="ECO:0000255" key="1"/>
<evidence type="ECO:0000255" key="2">
    <source>
        <dbReference type="PROSITE-ProRule" id="PRU00114"/>
    </source>
</evidence>
<evidence type="ECO:0000269" key="3">
    <source ref="1"/>
</evidence>
<evidence type="ECO:0000303" key="4">
    <source>
    </source>
</evidence>
<evidence type="ECO:0000303" key="5">
    <source>
    </source>
</evidence>
<evidence type="ECO:0000303" key="6">
    <source>
    </source>
</evidence>
<evidence type="ECO:0000305" key="7"/>
<evidence type="ECO:0000305" key="8">
    <source ref="1"/>
</evidence>
<organism>
    <name type="scientific">Homo sapiens</name>
    <name type="common">Human</name>
    <dbReference type="NCBI Taxonomy" id="9606"/>
    <lineage>
        <taxon>Eukaryota</taxon>
        <taxon>Metazoa</taxon>
        <taxon>Chordata</taxon>
        <taxon>Craniata</taxon>
        <taxon>Vertebrata</taxon>
        <taxon>Euteleostomi</taxon>
        <taxon>Mammalia</taxon>
        <taxon>Eutheria</taxon>
        <taxon>Euarchontoglires</taxon>
        <taxon>Primates</taxon>
        <taxon>Haplorrhini</taxon>
        <taxon>Catarrhini</taxon>
        <taxon>Hominidae</taxon>
        <taxon>Homo</taxon>
    </lineage>
</organism>
<dbReference type="SMR" id="P0DOX4"/>
<dbReference type="IntAct" id="P0DOX4">
    <property type="interactions" value="1"/>
</dbReference>
<dbReference type="iPTMnet" id="P0DOX4"/>
<dbReference type="PhosphoSitePlus" id="P0DOX4"/>
<dbReference type="jPOST" id="P0DOX4"/>
<dbReference type="Pharos" id="P0DOX4">
    <property type="development level" value="Tdark"/>
</dbReference>
<dbReference type="GO" id="GO:0005576">
    <property type="term" value="C:extracellular region"/>
    <property type="evidence" value="ECO:0007669"/>
    <property type="project" value="UniProtKB-SubCell"/>
</dbReference>
<dbReference type="GO" id="GO:0019814">
    <property type="term" value="C:immunoglobulin complex"/>
    <property type="evidence" value="ECO:0007669"/>
    <property type="project" value="UniProtKB-KW"/>
</dbReference>
<dbReference type="GO" id="GO:0005886">
    <property type="term" value="C:plasma membrane"/>
    <property type="evidence" value="ECO:0007669"/>
    <property type="project" value="UniProtKB-SubCell"/>
</dbReference>
<dbReference type="GO" id="GO:0002250">
    <property type="term" value="P:adaptive immune response"/>
    <property type="evidence" value="ECO:0007669"/>
    <property type="project" value="UniProtKB-KW"/>
</dbReference>
<dbReference type="CDD" id="cd07696">
    <property type="entry name" value="IgC1_CH3_IgAEM_CH2_IgG"/>
    <property type="match status" value="1"/>
</dbReference>
<dbReference type="CDD" id="cd05768">
    <property type="entry name" value="IgC1_CH3_IgAGD_CH4_IgAEM"/>
    <property type="match status" value="1"/>
</dbReference>
<dbReference type="CDD" id="cd04981">
    <property type="entry name" value="IgV_H"/>
    <property type="match status" value="1"/>
</dbReference>
<dbReference type="FunFam" id="2.60.40.10:FF:000998">
    <property type="entry name" value="Immunoglobulin heavy constant epsilon"/>
    <property type="match status" value="1"/>
</dbReference>
<dbReference type="FunFam" id="2.60.40.10:FF:001690">
    <property type="entry name" value="Immunoglobulin heavy constant epsilon"/>
    <property type="match status" value="1"/>
</dbReference>
<dbReference type="FunFam" id="2.60.40.10:FF:000463">
    <property type="entry name" value="Immunoglobulin heavy constant gamma 1"/>
    <property type="match status" value="1"/>
</dbReference>
<dbReference type="FunFam" id="2.60.40.10:FF:000556">
    <property type="entry name" value="Immunoglobulin heavy variable 7-81 (non-functional)"/>
    <property type="match status" value="1"/>
</dbReference>
<dbReference type="Gene3D" id="2.60.40.10">
    <property type="entry name" value="Immunoglobulins"/>
    <property type="match status" value="5"/>
</dbReference>
<dbReference type="InterPro" id="IPR007110">
    <property type="entry name" value="Ig-like_dom"/>
</dbReference>
<dbReference type="InterPro" id="IPR036179">
    <property type="entry name" value="Ig-like_dom_sf"/>
</dbReference>
<dbReference type="InterPro" id="IPR013783">
    <property type="entry name" value="Ig-like_fold"/>
</dbReference>
<dbReference type="InterPro" id="IPR003006">
    <property type="entry name" value="Ig/MHC_CS"/>
</dbReference>
<dbReference type="InterPro" id="IPR003597">
    <property type="entry name" value="Ig_C1-set"/>
</dbReference>
<dbReference type="InterPro" id="IPR003599">
    <property type="entry name" value="Ig_sub"/>
</dbReference>
<dbReference type="InterPro" id="IPR013106">
    <property type="entry name" value="Ig_V-set"/>
</dbReference>
<dbReference type="InterPro" id="IPR050380">
    <property type="entry name" value="Immune_Resp_Modulators"/>
</dbReference>
<dbReference type="PANTHER" id="PTHR23411">
    <property type="entry name" value="TAPASIN"/>
    <property type="match status" value="1"/>
</dbReference>
<dbReference type="Pfam" id="PF07654">
    <property type="entry name" value="C1-set"/>
    <property type="match status" value="4"/>
</dbReference>
<dbReference type="Pfam" id="PF07686">
    <property type="entry name" value="V-set"/>
    <property type="match status" value="1"/>
</dbReference>
<dbReference type="SMART" id="SM00409">
    <property type="entry name" value="IG"/>
    <property type="match status" value="1"/>
</dbReference>
<dbReference type="SMART" id="SM00407">
    <property type="entry name" value="IGc1"/>
    <property type="match status" value="4"/>
</dbReference>
<dbReference type="SMART" id="SM00406">
    <property type="entry name" value="IGv"/>
    <property type="match status" value="1"/>
</dbReference>
<dbReference type="SUPFAM" id="SSF48726">
    <property type="entry name" value="Immunoglobulin"/>
    <property type="match status" value="5"/>
</dbReference>
<dbReference type="PROSITE" id="PS50835">
    <property type="entry name" value="IG_LIKE"/>
    <property type="match status" value="5"/>
</dbReference>
<dbReference type="PROSITE" id="PS00290">
    <property type="entry name" value="IG_MHC"/>
    <property type="match status" value="3"/>
</dbReference>
<keyword id="KW-1064">Adaptive immunity</keyword>
<keyword id="KW-1003">Cell membrane</keyword>
<keyword id="KW-0903">Direct protein sequencing</keyword>
<keyword id="KW-1015">Disulfide bond</keyword>
<keyword id="KW-0325">Glycoprotein</keyword>
<keyword id="KW-0391">Immunity</keyword>
<keyword id="KW-1280">Immunoglobulin</keyword>
<keyword id="KW-0393">Immunoglobulin domain</keyword>
<keyword id="KW-0472">Membrane</keyword>
<keyword id="KW-0873">Pyrrolidone carboxylic acid</keyword>
<keyword id="KW-0677">Repeat</keyword>
<keyword id="KW-0964">Secreted</keyword>
<proteinExistence type="evidence at protein level"/>
<feature type="chain" id="PRO_0000439285" description="Immunoglobulin epsilon heavy chain">
    <location>
        <begin position="1"/>
        <end position="547"/>
    </location>
</feature>
<feature type="domain" description="Ig-like 1" evidence="2">
    <location>
        <begin position="1"/>
        <end position="120"/>
    </location>
</feature>
<feature type="domain" description="Ig-like 2" evidence="2">
    <location>
        <begin position="130"/>
        <end position="223"/>
    </location>
</feature>
<feature type="domain" description="Ig-like 3" evidence="2">
    <location>
        <begin position="232"/>
        <end position="329"/>
    </location>
</feature>
<feature type="domain" description="Ig-like 4" evidence="2">
    <location>
        <begin position="333"/>
        <end position="437"/>
    </location>
</feature>
<feature type="domain" description="Ig-like 5" evidence="2">
    <location>
        <begin position="443"/>
        <end position="542"/>
    </location>
</feature>
<feature type="region of interest" description="Variable (V) domain, involved in antigen recognition" evidence="7">
    <location>
        <begin position="1"/>
        <end position="124"/>
    </location>
</feature>
<feature type="region of interest" description="Constant (C) domain" evidence="7">
    <location>
        <begin position="125"/>
        <end position="547"/>
    </location>
</feature>
<feature type="modified residue" description="Pyrrolidone carboxylic acid" evidence="3">
    <location>
        <position position="1"/>
    </location>
</feature>
<feature type="glycosylation site" description="N-linked (GlcNAc...) asparagine" evidence="3">
    <location>
        <position position="145"/>
    </location>
</feature>
<feature type="glycosylation site" description="N-linked (GlcNAc...) asparagine" evidence="3">
    <location>
        <position position="173"/>
    </location>
</feature>
<feature type="glycosylation site" description="N-linked (GlcNAc...) asparagine" evidence="3">
    <location>
        <position position="219"/>
    </location>
</feature>
<feature type="glycosylation site" description="N-linked (GlcNAc...) asparagine" evidence="3">
    <location>
        <position position="265"/>
    </location>
</feature>
<feature type="glycosylation site" description="N-linked (GlcNAc...) asparagine" evidence="3">
    <location>
        <position position="371"/>
    </location>
</feature>
<feature type="glycosylation site" description="N-linked (GlcNAc...) asparagine" evidence="1">
    <location>
        <position position="383"/>
    </location>
</feature>
<feature type="glycosylation site" description="N-linked (GlcNAc...) asparagine" evidence="3">
    <location>
        <position position="394"/>
    </location>
</feature>
<feature type="disulfide bond" evidence="3">
    <location>
        <begin position="22"/>
        <end position="96"/>
    </location>
</feature>
<feature type="disulfide bond" description="Interchain (with a light chain)" evidence="3">
    <location>
        <position position="138"/>
    </location>
</feature>
<feature type="disulfide bond" evidence="3">
    <location>
        <begin position="139"/>
        <end position="225"/>
    </location>
</feature>
<feature type="disulfide bond" evidence="3">
    <location>
        <begin position="153"/>
        <end position="207"/>
    </location>
</feature>
<feature type="disulfide bond" description="Interchain (with a heavy chain)" evidence="3">
    <location>
        <position position="241"/>
    </location>
</feature>
<feature type="disulfide bond" evidence="3">
    <location>
        <begin position="254"/>
        <end position="312"/>
    </location>
</feature>
<feature type="disulfide bond" description="Interchain (with a heavy chain)" evidence="3">
    <location>
        <position position="328"/>
    </location>
</feature>
<feature type="disulfide bond" evidence="3">
    <location>
        <begin position="358"/>
        <end position="418"/>
    </location>
</feature>
<feature type="disulfide bond" evidence="3">
    <location>
        <begin position="464"/>
        <end position="524"/>
    </location>
</feature>
<sequence>QVQLVQSGAEVRKPGASVRVSCKASGYTFIDSYVGWIRQAPGHGLEWIHWINPNSGGTNYAPRFQGRVTMTRDASFSTAYMDLRSLRSDDSAVFYCAKSDPFWSDYNFDYSSSEEGTEVTYTVSGAWTLPSVFPLTRCCKNIPSNATSVTLGCLATGYFPEPVMVTWDTGSLNGTTLPATTLTLSGHYATISLLTVSGAWAKQMFTCRVAHTPSSTVDNKTFSVCSRDFTPPTVKILQSSCDGLGHFPPTIQLCLVSGYTPGTINITWLEDGQVMDVDLSTASTESQGELASTESQLTLSQKHWLSDRTYTCQVTYQGHTFQDSTKKCADSNPRGVSAYLSRPSPFDLFIRKSPTITCLVVDLAPSKGTVNLTWSRASGKPVNHSTRKEEKQRNGTLTVTSTLPVGTRDWIEGETYQCRVTHPHLPRALMRSTTKTSGPRAAPEVYAFATPEWPGSRDKRTLACLIQNFMPEDISVQWLHNEVQLPDARHSTTQPRKTKGSGFFVFSRLEVTRAEWQEKDEFICRAVHEAASPSQTVQRAVSVNPGK</sequence>
<protein>
    <recommendedName>
        <fullName evidence="7">Immunoglobulin epsilon heavy chain</fullName>
    </recommendedName>
    <alternativeName>
        <fullName evidence="8">Immunoglobulin epsilon heavy chain ND</fullName>
    </alternativeName>
</protein>